<keyword id="KW-0025">Alternative splicing</keyword>
<keyword id="KW-0342">GTP-binding</keyword>
<keyword id="KW-0547">Nucleotide-binding</keyword>
<keyword id="KW-0597">Phosphoprotein</keyword>
<keyword id="KW-1267">Proteomics identification</keyword>
<keyword id="KW-1185">Reference proteome</keyword>
<accession>P36915</accession>
<accession>B0S838</accession>
<accession>Q96CT5</accession>
<sequence length="607" mass="68661">MPRKKPFSVKQKKKQLQDKRERKRGLQDGLRSSSNSRSGSRERREEQTDTSDGESVTHHIRRLNQQPSQGLGPRGYDPNRYRLHFERDSREEVERRKRAAREQVLQPVSAELLELDIREVYQPGSVLDFPRRPPWSYEMSKEQLMSQEERSFQDYLGKIHGAYSSEKLSYFEHNLETWRQLWRVLEMSDIVLLITDIRHPVVNFPPALYEYVTGELGLALVLVLNKVDLAPPALVVAWKHYFHQHYPQLHVVLFTSFPRDPRTPQDPSSVLKKSRRRGRGWTRALGPEQLLRACEAITVGKVDLSSWREKIARDVAGATWGNGSGEEEEEEDGPAVLVEQQTDSAMEPTGPTQERYKDGVVTIGCVGFPNVGKSSLINGLVGRKVVSVSRTPGHTRYFQTYFLTPSVKLCDCPGLIFPSLLPRQLQVLAGIYPIAQIQEPYTAVGYLASRIPVQALLHLRHPEAEDPSAEHPWCAWDICEAWAEKRGYKTAKAARNDVYRAANSLLRLAVDGRLSLCFHPPGYSEQKGTWESHPETTELVVLQGRVGPAGDEEEEEEEELSSSCEEEGEEDRDADEEGEGDEETPTSAPGSSLAGRNPYALLGEDEC</sequence>
<gene>
    <name type="primary">GNL1</name>
    <name type="synonym">HSR1</name>
</gene>
<name>GNL1_HUMAN</name>
<evidence type="ECO:0000255" key="1"/>
<evidence type="ECO:0000255" key="2">
    <source>
        <dbReference type="PROSITE-ProRule" id="PRU01058"/>
    </source>
</evidence>
<evidence type="ECO:0000256" key="3">
    <source>
        <dbReference type="SAM" id="MobiDB-lite"/>
    </source>
</evidence>
<evidence type="ECO:0000303" key="4">
    <source>
    </source>
</evidence>
<evidence type="ECO:0000305" key="5"/>
<evidence type="ECO:0007744" key="6">
    <source>
    </source>
</evidence>
<evidence type="ECO:0007744" key="7">
    <source>
    </source>
</evidence>
<evidence type="ECO:0007744" key="8">
    <source>
    </source>
</evidence>
<evidence type="ECO:0007744" key="9">
    <source>
    </source>
</evidence>
<evidence type="ECO:0007744" key="10">
    <source>
    </source>
</evidence>
<evidence type="ECO:0007744" key="11">
    <source>
    </source>
</evidence>
<reference key="1">
    <citation type="journal article" date="1994" name="Mamm. Genome">
        <title>Structure and evolution of a member of a new subfamily of GTP-binding proteins mapping to the human MHC class I region.</title>
        <authorList>
            <person name="Vernet C."/>
            <person name="Ribouchon M.-T."/>
            <person name="Chimini G."/>
            <person name="Pontarotti P."/>
        </authorList>
    </citation>
    <scope>NUCLEOTIDE SEQUENCE [MRNA] (ISOFORM 2)</scope>
    <source>
        <tissue>T-cell</tissue>
    </source>
</reference>
<reference key="2">
    <citation type="submission" date="2003-05" db="EMBL/GenBank/DDBJ databases">
        <title>Cloning of human full-length CDSs in BD Creator(TM) system donor vector.</title>
        <authorList>
            <person name="Kalnine N."/>
            <person name="Chen X."/>
            <person name="Rolfs A."/>
            <person name="Halleck A."/>
            <person name="Hines L."/>
            <person name="Eisenstein S."/>
            <person name="Koundinya M."/>
            <person name="Raphael J."/>
            <person name="Moreira D."/>
            <person name="Kelley T."/>
            <person name="LaBaer J."/>
            <person name="Lin Y."/>
            <person name="Phelan M."/>
            <person name="Farmer A."/>
        </authorList>
    </citation>
    <scope>NUCLEOTIDE SEQUENCE [LARGE SCALE MRNA] (ISOFORM 1)</scope>
</reference>
<reference key="3">
    <citation type="journal article" date="2003" name="Nature">
        <title>The DNA sequence and analysis of human chromosome 6.</title>
        <authorList>
            <person name="Mungall A.J."/>
            <person name="Palmer S.A."/>
            <person name="Sims S.K."/>
            <person name="Edwards C.A."/>
            <person name="Ashurst J.L."/>
            <person name="Wilming L."/>
            <person name="Jones M.C."/>
            <person name="Horton R."/>
            <person name="Hunt S.E."/>
            <person name="Scott C.E."/>
            <person name="Gilbert J.G.R."/>
            <person name="Clamp M.E."/>
            <person name="Bethel G."/>
            <person name="Milne S."/>
            <person name="Ainscough R."/>
            <person name="Almeida J.P."/>
            <person name="Ambrose K.D."/>
            <person name="Andrews T.D."/>
            <person name="Ashwell R.I.S."/>
            <person name="Babbage A.K."/>
            <person name="Bagguley C.L."/>
            <person name="Bailey J."/>
            <person name="Banerjee R."/>
            <person name="Barker D.J."/>
            <person name="Barlow K.F."/>
            <person name="Bates K."/>
            <person name="Beare D.M."/>
            <person name="Beasley H."/>
            <person name="Beasley O."/>
            <person name="Bird C.P."/>
            <person name="Blakey S.E."/>
            <person name="Bray-Allen S."/>
            <person name="Brook J."/>
            <person name="Brown A.J."/>
            <person name="Brown J.Y."/>
            <person name="Burford D.C."/>
            <person name="Burrill W."/>
            <person name="Burton J."/>
            <person name="Carder C."/>
            <person name="Carter N.P."/>
            <person name="Chapman J.C."/>
            <person name="Clark S.Y."/>
            <person name="Clark G."/>
            <person name="Clee C.M."/>
            <person name="Clegg S."/>
            <person name="Cobley V."/>
            <person name="Collier R.E."/>
            <person name="Collins J.E."/>
            <person name="Colman L.K."/>
            <person name="Corby N.R."/>
            <person name="Coville G.J."/>
            <person name="Culley K.M."/>
            <person name="Dhami P."/>
            <person name="Davies J."/>
            <person name="Dunn M."/>
            <person name="Earthrowl M.E."/>
            <person name="Ellington A.E."/>
            <person name="Evans K.A."/>
            <person name="Faulkner L."/>
            <person name="Francis M.D."/>
            <person name="Frankish A."/>
            <person name="Frankland J."/>
            <person name="French L."/>
            <person name="Garner P."/>
            <person name="Garnett J."/>
            <person name="Ghori M.J."/>
            <person name="Gilby L.M."/>
            <person name="Gillson C.J."/>
            <person name="Glithero R.J."/>
            <person name="Grafham D.V."/>
            <person name="Grant M."/>
            <person name="Gribble S."/>
            <person name="Griffiths C."/>
            <person name="Griffiths M.N.D."/>
            <person name="Hall R."/>
            <person name="Halls K.S."/>
            <person name="Hammond S."/>
            <person name="Harley J.L."/>
            <person name="Hart E.A."/>
            <person name="Heath P.D."/>
            <person name="Heathcott R."/>
            <person name="Holmes S.J."/>
            <person name="Howden P.J."/>
            <person name="Howe K.L."/>
            <person name="Howell G.R."/>
            <person name="Huckle E."/>
            <person name="Humphray S.J."/>
            <person name="Humphries M.D."/>
            <person name="Hunt A.R."/>
            <person name="Johnson C.M."/>
            <person name="Joy A.A."/>
            <person name="Kay M."/>
            <person name="Keenan S.J."/>
            <person name="Kimberley A.M."/>
            <person name="King A."/>
            <person name="Laird G.K."/>
            <person name="Langford C."/>
            <person name="Lawlor S."/>
            <person name="Leongamornlert D.A."/>
            <person name="Leversha M."/>
            <person name="Lloyd C.R."/>
            <person name="Lloyd D.M."/>
            <person name="Loveland J.E."/>
            <person name="Lovell J."/>
            <person name="Martin S."/>
            <person name="Mashreghi-Mohammadi M."/>
            <person name="Maslen G.L."/>
            <person name="Matthews L."/>
            <person name="McCann O.T."/>
            <person name="McLaren S.J."/>
            <person name="McLay K."/>
            <person name="McMurray A."/>
            <person name="Moore M.J.F."/>
            <person name="Mullikin J.C."/>
            <person name="Niblett D."/>
            <person name="Nickerson T."/>
            <person name="Novik K.L."/>
            <person name="Oliver K."/>
            <person name="Overton-Larty E.K."/>
            <person name="Parker A."/>
            <person name="Patel R."/>
            <person name="Pearce A.V."/>
            <person name="Peck A.I."/>
            <person name="Phillimore B.J.C.T."/>
            <person name="Phillips S."/>
            <person name="Plumb R.W."/>
            <person name="Porter K.M."/>
            <person name="Ramsey Y."/>
            <person name="Ranby S.A."/>
            <person name="Rice C.M."/>
            <person name="Ross M.T."/>
            <person name="Searle S.M."/>
            <person name="Sehra H.K."/>
            <person name="Sheridan E."/>
            <person name="Skuce C.D."/>
            <person name="Smith S."/>
            <person name="Smith M."/>
            <person name="Spraggon L."/>
            <person name="Squares S.L."/>
            <person name="Steward C.A."/>
            <person name="Sycamore N."/>
            <person name="Tamlyn-Hall G."/>
            <person name="Tester J."/>
            <person name="Theaker A.J."/>
            <person name="Thomas D.W."/>
            <person name="Thorpe A."/>
            <person name="Tracey A."/>
            <person name="Tromans A."/>
            <person name="Tubby B."/>
            <person name="Wall M."/>
            <person name="Wallis J.M."/>
            <person name="West A.P."/>
            <person name="White S.S."/>
            <person name="Whitehead S.L."/>
            <person name="Whittaker H."/>
            <person name="Wild A."/>
            <person name="Willey D.J."/>
            <person name="Wilmer T.E."/>
            <person name="Wood J.M."/>
            <person name="Wray P.W."/>
            <person name="Wyatt J.C."/>
            <person name="Young L."/>
            <person name="Younger R.M."/>
            <person name="Bentley D.R."/>
            <person name="Coulson A."/>
            <person name="Durbin R.M."/>
            <person name="Hubbard T."/>
            <person name="Sulston J.E."/>
            <person name="Dunham I."/>
            <person name="Rogers J."/>
            <person name="Beck S."/>
        </authorList>
    </citation>
    <scope>NUCLEOTIDE SEQUENCE [LARGE SCALE GENOMIC DNA]</scope>
</reference>
<reference key="4">
    <citation type="submission" date="2005-07" db="EMBL/GenBank/DDBJ databases">
        <authorList>
            <person name="Mural R.J."/>
            <person name="Istrail S."/>
            <person name="Sutton G.G."/>
            <person name="Florea L."/>
            <person name="Halpern A.L."/>
            <person name="Mobarry C.M."/>
            <person name="Lippert R."/>
            <person name="Walenz B."/>
            <person name="Shatkay H."/>
            <person name="Dew I."/>
            <person name="Miller J.R."/>
            <person name="Flanigan M.J."/>
            <person name="Edwards N.J."/>
            <person name="Bolanos R."/>
            <person name="Fasulo D."/>
            <person name="Halldorsson B.V."/>
            <person name="Hannenhalli S."/>
            <person name="Turner R."/>
            <person name="Yooseph S."/>
            <person name="Lu F."/>
            <person name="Nusskern D.R."/>
            <person name="Shue B.C."/>
            <person name="Zheng X.H."/>
            <person name="Zhong F."/>
            <person name="Delcher A.L."/>
            <person name="Huson D.H."/>
            <person name="Kravitz S.A."/>
            <person name="Mouchard L."/>
            <person name="Reinert K."/>
            <person name="Remington K.A."/>
            <person name="Clark A.G."/>
            <person name="Waterman M.S."/>
            <person name="Eichler E.E."/>
            <person name="Adams M.D."/>
            <person name="Hunkapiller M.W."/>
            <person name="Myers E.W."/>
            <person name="Venter J.C."/>
        </authorList>
    </citation>
    <scope>NUCLEOTIDE SEQUENCE [LARGE SCALE GENOMIC DNA]</scope>
</reference>
<reference key="5">
    <citation type="journal article" date="2004" name="Genome Res.">
        <title>The status, quality, and expansion of the NIH full-length cDNA project: the Mammalian Gene Collection (MGC).</title>
        <authorList>
            <consortium name="The MGC Project Team"/>
        </authorList>
    </citation>
    <scope>NUCLEOTIDE SEQUENCE [LARGE SCALE MRNA] (ISOFORM 1)</scope>
    <source>
        <tissue>Muscle</tissue>
        <tissue>Skin</tissue>
    </source>
</reference>
<reference key="6">
    <citation type="journal article" date="2006" name="Cell">
        <title>Global, in vivo, and site-specific phosphorylation dynamics in signaling networks.</title>
        <authorList>
            <person name="Olsen J.V."/>
            <person name="Blagoev B."/>
            <person name="Gnad F."/>
            <person name="Macek B."/>
            <person name="Kumar C."/>
            <person name="Mortensen P."/>
            <person name="Mann M."/>
        </authorList>
    </citation>
    <scope>IDENTIFICATION BY MASS SPECTROMETRY [LARGE SCALE ANALYSIS]</scope>
    <source>
        <tissue>Cervix carcinoma</tissue>
    </source>
</reference>
<reference key="7">
    <citation type="journal article" date="2007" name="Science">
        <title>ATM and ATR substrate analysis reveals extensive protein networks responsive to DNA damage.</title>
        <authorList>
            <person name="Matsuoka S."/>
            <person name="Ballif B.A."/>
            <person name="Smogorzewska A."/>
            <person name="McDonald E.R. III"/>
            <person name="Hurov K.E."/>
            <person name="Luo J."/>
            <person name="Bakalarski C.E."/>
            <person name="Zhao Z."/>
            <person name="Solimini N."/>
            <person name="Lerenthal Y."/>
            <person name="Shiloh Y."/>
            <person name="Gygi S.P."/>
            <person name="Elledge S.J."/>
        </authorList>
    </citation>
    <scope>PHOSPHORYLATION [LARGE SCALE ANALYSIS] AT SER-68</scope>
    <scope>IDENTIFICATION BY MASS SPECTROMETRY [LARGE SCALE ANALYSIS]</scope>
    <source>
        <tissue>Embryonic kidney</tissue>
    </source>
</reference>
<reference key="8">
    <citation type="journal article" date="2008" name="Proc. Natl. Acad. Sci. U.S.A.">
        <title>A quantitative atlas of mitotic phosphorylation.</title>
        <authorList>
            <person name="Dephoure N."/>
            <person name="Zhou C."/>
            <person name="Villen J."/>
            <person name="Beausoleil S.A."/>
            <person name="Bakalarski C.E."/>
            <person name="Elledge S.J."/>
            <person name="Gygi S.P."/>
        </authorList>
    </citation>
    <scope>PHOSPHORYLATION [LARGE SCALE ANALYSIS] AT SER-32; SER-33; SER-34; THR-48; THR-50; SER-51; SER-324; SER-561; SER-562 AND SER-563</scope>
    <scope>IDENTIFICATION BY MASS SPECTROMETRY [LARGE SCALE ANALYSIS]</scope>
    <source>
        <tissue>Cervix carcinoma</tissue>
    </source>
</reference>
<reference key="9">
    <citation type="journal article" date="2009" name="Sci. Signal.">
        <title>Quantitative phosphoproteomic analysis of T cell receptor signaling reveals system-wide modulation of protein-protein interactions.</title>
        <authorList>
            <person name="Mayya V."/>
            <person name="Lundgren D.H."/>
            <person name="Hwang S.-I."/>
            <person name="Rezaul K."/>
            <person name="Wu L."/>
            <person name="Eng J.K."/>
            <person name="Rodionov V."/>
            <person name="Han D.K."/>
        </authorList>
    </citation>
    <scope>PHOSPHORYLATION [LARGE SCALE ANALYSIS] AT THR-48; THR-50 AND SER-51</scope>
    <scope>IDENTIFICATION BY MASS SPECTROMETRY [LARGE SCALE ANALYSIS]</scope>
    <source>
        <tissue>Leukemic T-cell</tissue>
    </source>
</reference>
<reference key="10">
    <citation type="journal article" date="2010" name="Sci. Signal.">
        <title>Quantitative phosphoproteomics reveals widespread full phosphorylation site occupancy during mitosis.</title>
        <authorList>
            <person name="Olsen J.V."/>
            <person name="Vermeulen M."/>
            <person name="Santamaria A."/>
            <person name="Kumar C."/>
            <person name="Miller M.L."/>
            <person name="Jensen L.J."/>
            <person name="Gnad F."/>
            <person name="Cox J."/>
            <person name="Jensen T.S."/>
            <person name="Nigg E.A."/>
            <person name="Brunak S."/>
            <person name="Mann M."/>
        </authorList>
    </citation>
    <scope>IDENTIFICATION BY MASS SPECTROMETRY [LARGE SCALE ANALYSIS]</scope>
    <source>
        <tissue>Cervix carcinoma</tissue>
    </source>
</reference>
<reference key="11">
    <citation type="journal article" date="2011" name="BMC Syst. Biol.">
        <title>Initial characterization of the human central proteome.</title>
        <authorList>
            <person name="Burkard T.R."/>
            <person name="Planyavsky M."/>
            <person name="Kaupe I."/>
            <person name="Breitwieser F.P."/>
            <person name="Buerckstuemmer T."/>
            <person name="Bennett K.L."/>
            <person name="Superti-Furga G."/>
            <person name="Colinge J."/>
        </authorList>
    </citation>
    <scope>IDENTIFICATION BY MASS SPECTROMETRY [LARGE SCALE ANALYSIS]</scope>
</reference>
<reference key="12">
    <citation type="journal article" date="2011" name="Sci. Signal.">
        <title>System-wide temporal characterization of the proteome and phosphoproteome of human embryonic stem cell differentiation.</title>
        <authorList>
            <person name="Rigbolt K.T."/>
            <person name="Prokhorova T.A."/>
            <person name="Akimov V."/>
            <person name="Henningsen J."/>
            <person name="Johansen P.T."/>
            <person name="Kratchmarova I."/>
            <person name="Kassem M."/>
            <person name="Mann M."/>
            <person name="Olsen J.V."/>
            <person name="Blagoev B."/>
        </authorList>
    </citation>
    <scope>PHOSPHORYLATION [LARGE SCALE ANALYSIS] AT SER-324</scope>
    <scope>IDENTIFICATION BY MASS SPECTROMETRY [LARGE SCALE ANALYSIS]</scope>
</reference>
<reference key="13">
    <citation type="journal article" date="2013" name="J. Proteome Res.">
        <title>Toward a comprehensive characterization of a human cancer cell phosphoproteome.</title>
        <authorList>
            <person name="Zhou H."/>
            <person name="Di Palma S."/>
            <person name="Preisinger C."/>
            <person name="Peng M."/>
            <person name="Polat A.N."/>
            <person name="Heck A.J."/>
            <person name="Mohammed S."/>
        </authorList>
    </citation>
    <scope>PHOSPHORYLATION [LARGE SCALE ANALYSIS] AT THR-48; THR-50; SER-51 AND SER-68</scope>
    <scope>IDENTIFICATION BY MASS SPECTROMETRY [LARGE SCALE ANALYSIS]</scope>
    <source>
        <tissue>Cervix carcinoma</tissue>
        <tissue>Erythroleukemia</tissue>
    </source>
</reference>
<reference key="14">
    <citation type="journal article" date="2014" name="J. Proteomics">
        <title>An enzyme assisted RP-RPLC approach for in-depth analysis of human liver phosphoproteome.</title>
        <authorList>
            <person name="Bian Y."/>
            <person name="Song C."/>
            <person name="Cheng K."/>
            <person name="Dong M."/>
            <person name="Wang F."/>
            <person name="Huang J."/>
            <person name="Sun D."/>
            <person name="Wang L."/>
            <person name="Ye M."/>
            <person name="Zou H."/>
        </authorList>
    </citation>
    <scope>PHOSPHORYLATION [LARGE SCALE ANALYSIS] AT THR-48; THR-50 AND SER-51</scope>
    <scope>IDENTIFICATION BY MASS SPECTROMETRY [LARGE SCALE ANALYSIS]</scope>
    <source>
        <tissue>Liver</tissue>
    </source>
</reference>
<comment type="function">
    <text>Possible regulatory or functional link with the histocompatibility cluster.</text>
</comment>
<comment type="alternative products">
    <event type="alternative splicing"/>
    <isoform>
        <id>P36915-1</id>
        <name>1</name>
        <sequence type="displayed"/>
    </isoform>
    <isoform>
        <id>P36915-2</id>
        <name>2</name>
        <sequence type="described" ref="VSP_026992 VSP_026993"/>
    </isoform>
</comment>
<comment type="domain">
    <text>In contrast to other GTP-binding proteins, this family is characterized by a circular permutation of the GTPase motifs described by a G4-G1-G3 pattern.</text>
</comment>
<comment type="similarity">
    <text evidence="2">Belongs to the TRAFAC class YlqF/YawG GTPase family.</text>
</comment>
<dbReference type="EMBL" id="L25665">
    <property type="protein sequence ID" value="AAA66492.1"/>
    <property type="molecule type" value="mRNA"/>
</dbReference>
<dbReference type="EMBL" id="BT006648">
    <property type="protein sequence ID" value="AAP35294.1"/>
    <property type="molecule type" value="mRNA"/>
</dbReference>
<dbReference type="EMBL" id="AL662800">
    <property type="status" value="NOT_ANNOTATED_CDS"/>
    <property type="molecule type" value="Genomic_DNA"/>
</dbReference>
<dbReference type="EMBL" id="AL662825">
    <property type="status" value="NOT_ANNOTATED_CDS"/>
    <property type="molecule type" value="Genomic_DNA"/>
</dbReference>
<dbReference type="EMBL" id="BX000357">
    <property type="status" value="NOT_ANNOTATED_CDS"/>
    <property type="molecule type" value="Genomic_DNA"/>
</dbReference>
<dbReference type="EMBL" id="BX248518">
    <property type="status" value="NOT_ANNOTATED_CDS"/>
    <property type="molecule type" value="Genomic_DNA"/>
</dbReference>
<dbReference type="EMBL" id="BX927220">
    <property type="status" value="NOT_ANNOTATED_CDS"/>
    <property type="molecule type" value="Genomic_DNA"/>
</dbReference>
<dbReference type="EMBL" id="CR388372">
    <property type="status" value="NOT_ANNOTATED_CDS"/>
    <property type="molecule type" value="Genomic_DNA"/>
</dbReference>
<dbReference type="EMBL" id="CR936927">
    <property type="status" value="NOT_ANNOTATED_CDS"/>
    <property type="molecule type" value="Genomic_DNA"/>
</dbReference>
<dbReference type="EMBL" id="CH471081">
    <property type="protein sequence ID" value="EAX03294.1"/>
    <property type="molecule type" value="Genomic_DNA"/>
</dbReference>
<dbReference type="EMBL" id="BC013959">
    <property type="protein sequence ID" value="AAH13959.1"/>
    <property type="molecule type" value="mRNA"/>
</dbReference>
<dbReference type="EMBL" id="BC018366">
    <property type="protein sequence ID" value="AAH18366.1"/>
    <property type="molecule type" value="mRNA"/>
</dbReference>
<dbReference type="CCDS" id="CCDS4680.1">
    <molecule id="P36915-1"/>
</dbReference>
<dbReference type="PIR" id="I57013">
    <property type="entry name" value="I57013"/>
</dbReference>
<dbReference type="RefSeq" id="NP_005266.2">
    <molecule id="P36915-1"/>
    <property type="nucleotide sequence ID" value="NM_005275.3"/>
</dbReference>
<dbReference type="RefSeq" id="XP_005249072.1">
    <property type="nucleotide sequence ID" value="XM_005249015.3"/>
</dbReference>
<dbReference type="BioGRID" id="109056">
    <property type="interactions" value="132"/>
</dbReference>
<dbReference type="FunCoup" id="P36915">
    <property type="interactions" value="1355"/>
</dbReference>
<dbReference type="IntAct" id="P36915">
    <property type="interactions" value="36"/>
</dbReference>
<dbReference type="STRING" id="9606.ENSP00000365806"/>
<dbReference type="GlyGen" id="P36915">
    <property type="glycosylation" value="2 sites, 1 O-linked glycan (1 site)"/>
</dbReference>
<dbReference type="iPTMnet" id="P36915"/>
<dbReference type="PhosphoSitePlus" id="P36915"/>
<dbReference type="BioMuta" id="GNL1"/>
<dbReference type="DMDM" id="158939140"/>
<dbReference type="jPOST" id="P36915"/>
<dbReference type="MassIVE" id="P36915"/>
<dbReference type="PaxDb" id="9606-ENSP00000365806"/>
<dbReference type="PeptideAtlas" id="P36915"/>
<dbReference type="ProteomicsDB" id="55237">
    <molecule id="P36915-1"/>
</dbReference>
<dbReference type="ProteomicsDB" id="55238">
    <molecule id="P36915-2"/>
</dbReference>
<dbReference type="Pumba" id="P36915"/>
<dbReference type="Antibodypedia" id="26307">
    <property type="antibodies" value="247 antibodies from 30 providers"/>
</dbReference>
<dbReference type="DNASU" id="2794"/>
<dbReference type="Ensembl" id="ENST00000376621.8">
    <molecule id="P36915-1"/>
    <property type="protein sequence ID" value="ENSP00000365806.3"/>
    <property type="gene ID" value="ENSG00000204590.13"/>
</dbReference>
<dbReference type="Ensembl" id="ENST00000383596.6">
    <molecule id="P36915-1"/>
    <property type="protein sequence ID" value="ENSP00000373090.2"/>
    <property type="gene ID" value="ENSG00000206492.11"/>
</dbReference>
<dbReference type="Ensembl" id="ENST00000417834.5">
    <molecule id="P36915-1"/>
    <property type="protein sequence ID" value="ENSP00000403576.1"/>
    <property type="gene ID" value="ENSG00000226882.9"/>
</dbReference>
<dbReference type="Ensembl" id="ENST00000428189.5">
    <molecule id="P36915-1"/>
    <property type="protein sequence ID" value="ENSP00000409074.1"/>
    <property type="gene ID" value="ENSG00000229470.9"/>
</dbReference>
<dbReference type="Ensembl" id="ENST00000437917.5">
    <molecule id="P36915-1"/>
    <property type="protein sequence ID" value="ENSP00000411162.1"/>
    <property type="gene ID" value="ENSG00000228581.9"/>
</dbReference>
<dbReference type="Ensembl" id="ENST00000441604.5">
    <molecule id="P36915-1"/>
    <property type="protein sequence ID" value="ENSP00000394290.1"/>
    <property type="gene ID" value="ENSG00000235986.9"/>
</dbReference>
<dbReference type="Ensembl" id="ENST00000454829.5">
    <molecule id="P36915-1"/>
    <property type="protein sequence ID" value="ENSP00000409367.1"/>
    <property type="gene ID" value="ENSG00000232143.9"/>
</dbReference>
<dbReference type="GeneID" id="2794"/>
<dbReference type="KEGG" id="hsa:2794"/>
<dbReference type="MANE-Select" id="ENST00000376621.8">
    <property type="protein sequence ID" value="ENSP00000365806.3"/>
    <property type="RefSeq nucleotide sequence ID" value="NM_005275.5"/>
    <property type="RefSeq protein sequence ID" value="NP_005266.2"/>
</dbReference>
<dbReference type="UCSC" id="uc003nqh.4">
    <molecule id="P36915-1"/>
    <property type="organism name" value="human"/>
</dbReference>
<dbReference type="AGR" id="HGNC:4413"/>
<dbReference type="CTD" id="2794"/>
<dbReference type="DisGeNET" id="2794"/>
<dbReference type="GeneCards" id="GNL1"/>
<dbReference type="HGNC" id="HGNC:4413">
    <property type="gene designation" value="GNL1"/>
</dbReference>
<dbReference type="HPA" id="ENSG00000204590">
    <property type="expression patterns" value="Low tissue specificity"/>
</dbReference>
<dbReference type="MIM" id="143024">
    <property type="type" value="gene"/>
</dbReference>
<dbReference type="neXtProt" id="NX_P36915"/>
<dbReference type="OpenTargets" id="ENSG00000204590"/>
<dbReference type="PharmGKB" id="PA28792"/>
<dbReference type="VEuPathDB" id="HostDB:ENSG00000204590"/>
<dbReference type="eggNOG" id="KOG1424">
    <property type="taxonomic scope" value="Eukaryota"/>
</dbReference>
<dbReference type="GeneTree" id="ENSGT00940000158047"/>
<dbReference type="HOGENOM" id="CLU_013649_1_1_1"/>
<dbReference type="InParanoid" id="P36915"/>
<dbReference type="OMA" id="CDFPVRP"/>
<dbReference type="OrthoDB" id="391988at2759"/>
<dbReference type="PAN-GO" id="P36915">
    <property type="GO annotations" value="1 GO annotation based on evolutionary models"/>
</dbReference>
<dbReference type="PhylomeDB" id="P36915"/>
<dbReference type="TreeFam" id="TF324569"/>
<dbReference type="PathwayCommons" id="P36915"/>
<dbReference type="SignaLink" id="P36915"/>
<dbReference type="BioGRID-ORCS" id="2794">
    <property type="hits" value="38 hits in 1149 CRISPR screens"/>
</dbReference>
<dbReference type="CD-CODE" id="FB4E32DD">
    <property type="entry name" value="Presynaptic clusters and postsynaptic densities"/>
</dbReference>
<dbReference type="ChiTaRS" id="GNL1">
    <property type="organism name" value="human"/>
</dbReference>
<dbReference type="GenomeRNAi" id="2794"/>
<dbReference type="Pharos" id="P36915">
    <property type="development level" value="Tbio"/>
</dbReference>
<dbReference type="PRO" id="PR:P36915"/>
<dbReference type="Proteomes" id="UP000005640">
    <property type="component" value="Chromosome 6"/>
</dbReference>
<dbReference type="RNAct" id="P36915">
    <property type="molecule type" value="protein"/>
</dbReference>
<dbReference type="Bgee" id="ENSG00000204590">
    <property type="expression patterns" value="Expressed in right testis and 99 other cell types or tissues"/>
</dbReference>
<dbReference type="ExpressionAtlas" id="P36915">
    <property type="expression patterns" value="baseline and differential"/>
</dbReference>
<dbReference type="GO" id="GO:0005615">
    <property type="term" value="C:extracellular space"/>
    <property type="evidence" value="ECO:0000303"/>
    <property type="project" value="UniProtKB"/>
</dbReference>
<dbReference type="GO" id="GO:0005634">
    <property type="term" value="C:nucleus"/>
    <property type="evidence" value="ECO:0007005"/>
    <property type="project" value="UniProtKB"/>
</dbReference>
<dbReference type="GO" id="GO:0005525">
    <property type="term" value="F:GTP binding"/>
    <property type="evidence" value="ECO:0000303"/>
    <property type="project" value="UniProtKB"/>
</dbReference>
<dbReference type="GO" id="GO:0003924">
    <property type="term" value="F:GTPase activity"/>
    <property type="evidence" value="ECO:0000318"/>
    <property type="project" value="GO_Central"/>
</dbReference>
<dbReference type="GO" id="GO:0005198">
    <property type="term" value="F:structural molecule activity"/>
    <property type="evidence" value="ECO:0000303"/>
    <property type="project" value="UniProtKB"/>
</dbReference>
<dbReference type="GO" id="GO:0006974">
    <property type="term" value="P:DNA damage response"/>
    <property type="evidence" value="ECO:0000314"/>
    <property type="project" value="UniProtKB"/>
</dbReference>
<dbReference type="GO" id="GO:0007165">
    <property type="term" value="P:signal transduction"/>
    <property type="evidence" value="ECO:0000303"/>
    <property type="project" value="UniProtKB"/>
</dbReference>
<dbReference type="GO" id="GO:0002456">
    <property type="term" value="P:T cell mediated immunity"/>
    <property type="evidence" value="ECO:0000303"/>
    <property type="project" value="UniProtKB"/>
</dbReference>
<dbReference type="CDD" id="cd01857">
    <property type="entry name" value="HSR1_MMR1"/>
    <property type="match status" value="1"/>
</dbReference>
<dbReference type="Gene3D" id="3.40.50.300">
    <property type="entry name" value="P-loop containing nucleotide triphosphate hydrolases"/>
    <property type="match status" value="1"/>
</dbReference>
<dbReference type="InterPro" id="IPR030378">
    <property type="entry name" value="G_CP_dom"/>
</dbReference>
<dbReference type="InterPro" id="IPR043358">
    <property type="entry name" value="GNL1-like"/>
</dbReference>
<dbReference type="InterPro" id="IPR006073">
    <property type="entry name" value="GTP-bd"/>
</dbReference>
<dbReference type="InterPro" id="IPR027417">
    <property type="entry name" value="P-loop_NTPase"/>
</dbReference>
<dbReference type="PANTHER" id="PTHR45709:SF3">
    <property type="entry name" value="GUANINE NUCLEOTIDE-BINDING PROTEIN-LIKE 1"/>
    <property type="match status" value="1"/>
</dbReference>
<dbReference type="PANTHER" id="PTHR45709">
    <property type="entry name" value="LARGE SUBUNIT GTPASE 1 HOMOLOG-RELATED"/>
    <property type="match status" value="1"/>
</dbReference>
<dbReference type="Pfam" id="PF01926">
    <property type="entry name" value="MMR_HSR1"/>
    <property type="match status" value="1"/>
</dbReference>
<dbReference type="SUPFAM" id="SSF52540">
    <property type="entry name" value="P-loop containing nucleoside triphosphate hydrolases"/>
    <property type="match status" value="1"/>
</dbReference>
<dbReference type="PROSITE" id="PS51721">
    <property type="entry name" value="G_CP"/>
    <property type="match status" value="1"/>
</dbReference>
<feature type="chain" id="PRO_0000122441" description="Guanine nucleotide-binding protein-like 1">
    <location>
        <begin position="1"/>
        <end position="607"/>
    </location>
</feature>
<feature type="domain" description="CP-type G" evidence="2">
    <location>
        <begin position="178"/>
        <end position="418"/>
    </location>
</feature>
<feature type="region of interest" description="Disordered" evidence="3">
    <location>
        <begin position="1"/>
        <end position="81"/>
    </location>
</feature>
<feature type="region of interest" description="Disordered" evidence="3">
    <location>
        <begin position="547"/>
        <end position="607"/>
    </location>
</feature>
<feature type="compositionally biased region" description="Basic residues" evidence="3">
    <location>
        <begin position="1"/>
        <end position="14"/>
    </location>
</feature>
<feature type="compositionally biased region" description="Basic and acidic residues" evidence="3">
    <location>
        <begin position="15"/>
        <end position="26"/>
    </location>
</feature>
<feature type="compositionally biased region" description="Acidic residues" evidence="3">
    <location>
        <begin position="550"/>
        <end position="584"/>
    </location>
</feature>
<feature type="binding site" evidence="1">
    <location>
        <begin position="225"/>
        <end position="228"/>
    </location>
    <ligand>
        <name>GTP</name>
        <dbReference type="ChEBI" id="CHEBI:37565"/>
    </ligand>
</feature>
<feature type="binding site" evidence="1">
    <location>
        <begin position="367"/>
        <end position="374"/>
    </location>
    <ligand>
        <name>GTP</name>
        <dbReference type="ChEBI" id="CHEBI:37565"/>
    </ligand>
</feature>
<feature type="binding site" evidence="1">
    <location>
        <begin position="411"/>
        <end position="415"/>
    </location>
    <ligand>
        <name>GTP</name>
        <dbReference type="ChEBI" id="CHEBI:37565"/>
    </ligand>
</feature>
<feature type="modified residue" description="Phosphoserine" evidence="7">
    <location>
        <position position="32"/>
    </location>
</feature>
<feature type="modified residue" description="Phosphoserine" evidence="7">
    <location>
        <position position="33"/>
    </location>
</feature>
<feature type="modified residue" description="Phosphoserine" evidence="7">
    <location>
        <position position="34"/>
    </location>
</feature>
<feature type="modified residue" description="Phosphothreonine" evidence="7 8 10 11">
    <location>
        <position position="48"/>
    </location>
</feature>
<feature type="modified residue" description="Phosphothreonine" evidence="7 8 10 11">
    <location>
        <position position="50"/>
    </location>
</feature>
<feature type="modified residue" description="Phosphoserine" evidence="7 8 10 11">
    <location>
        <position position="51"/>
    </location>
</feature>
<feature type="modified residue" description="Phosphoserine" evidence="6 10">
    <location>
        <position position="68"/>
    </location>
</feature>
<feature type="modified residue" description="Phosphoserine" evidence="7 9">
    <location>
        <position position="324"/>
    </location>
</feature>
<feature type="modified residue" description="Phosphoserine" evidence="7">
    <location>
        <position position="561"/>
    </location>
</feature>
<feature type="modified residue" description="Phosphoserine" evidence="7">
    <location>
        <position position="562"/>
    </location>
</feature>
<feature type="modified residue" description="Phosphoserine" evidence="7">
    <location>
        <position position="563"/>
    </location>
</feature>
<feature type="splice variant" id="VSP_026992" description="In isoform 2." evidence="4">
    <location>
        <begin position="1"/>
        <end position="177"/>
    </location>
</feature>
<feature type="splice variant" id="VSP_026993" description="In isoform 2." evidence="4">
    <original>WRQLWR</original>
    <variation>MEAAVA</variation>
    <location>
        <begin position="178"/>
        <end position="183"/>
    </location>
</feature>
<feature type="sequence conflict" description="In Ref. 1; AAA66492." evidence="5" ref="1">
    <original>PA</original>
    <variation>RR</variation>
    <location>
        <begin position="232"/>
        <end position="233"/>
    </location>
</feature>
<feature type="sequence conflict" description="In Ref. 1; AAA66492." evidence="5" ref="1">
    <location>
        <position position="315"/>
    </location>
</feature>
<feature type="sequence conflict" description="In Ref. 1; AAA66492." evidence="5" ref="1">
    <original>E</original>
    <variation>EQ</variation>
    <location>
        <position position="339"/>
    </location>
</feature>
<feature type="sequence conflict" description="In Ref. 1; AAA66492." evidence="5" ref="1">
    <original>L</original>
    <variation>V</variation>
    <location>
        <position position="514"/>
    </location>
</feature>
<organism>
    <name type="scientific">Homo sapiens</name>
    <name type="common">Human</name>
    <dbReference type="NCBI Taxonomy" id="9606"/>
    <lineage>
        <taxon>Eukaryota</taxon>
        <taxon>Metazoa</taxon>
        <taxon>Chordata</taxon>
        <taxon>Craniata</taxon>
        <taxon>Vertebrata</taxon>
        <taxon>Euteleostomi</taxon>
        <taxon>Mammalia</taxon>
        <taxon>Eutheria</taxon>
        <taxon>Euarchontoglires</taxon>
        <taxon>Primates</taxon>
        <taxon>Haplorrhini</taxon>
        <taxon>Catarrhini</taxon>
        <taxon>Hominidae</taxon>
        <taxon>Homo</taxon>
    </lineage>
</organism>
<protein>
    <recommendedName>
        <fullName>Guanine nucleotide-binding protein-like 1</fullName>
    </recommendedName>
    <alternativeName>
        <fullName>GTP-binding protein HSR1</fullName>
    </alternativeName>
</protein>
<proteinExistence type="evidence at protein level"/>